<comment type="function">
    <text evidence="1">Binds to the 23S rRNA.</text>
</comment>
<comment type="similarity">
    <text evidence="1">Belongs to the bacterial ribosomal protein bL9 family.</text>
</comment>
<feature type="chain" id="PRO_1000081499" description="Large ribosomal subunit protein bL9">
    <location>
        <begin position="1"/>
        <end position="148"/>
    </location>
</feature>
<keyword id="KW-1185">Reference proteome</keyword>
<keyword id="KW-0687">Ribonucleoprotein</keyword>
<keyword id="KW-0689">Ribosomal protein</keyword>
<keyword id="KW-0694">RNA-binding</keyword>
<keyword id="KW-0699">rRNA-binding</keyword>
<organism>
    <name type="scientific">Salinispora tropica (strain ATCC BAA-916 / DSM 44818 / JCM 13857 / NBRC 105044 / CNB-440)</name>
    <dbReference type="NCBI Taxonomy" id="369723"/>
    <lineage>
        <taxon>Bacteria</taxon>
        <taxon>Bacillati</taxon>
        <taxon>Actinomycetota</taxon>
        <taxon>Actinomycetes</taxon>
        <taxon>Micromonosporales</taxon>
        <taxon>Micromonosporaceae</taxon>
        <taxon>Salinispora</taxon>
    </lineage>
</organism>
<gene>
    <name evidence="1" type="primary">rplI</name>
    <name type="ordered locus">Strop_4553</name>
</gene>
<proteinExistence type="inferred from homology"/>
<accession>A4XDG5</accession>
<evidence type="ECO:0000255" key="1">
    <source>
        <dbReference type="HAMAP-Rule" id="MF_00503"/>
    </source>
</evidence>
<evidence type="ECO:0000305" key="2"/>
<name>RL9_SALTO</name>
<sequence length="148" mass="15719">MKIILTQEVSGLGAPGDIVEVKNGYGRNYLLPQGFAIAWTKGAEKQVTVIKRARSAREIRDLGHANEVKGQLEGLKVALKARAGEGGRLFGSVTAAEIVAAVKAAGGPTLDRRRLELPGHIKSLGSYPVRIKLHPEVTAAFDLSVVQG</sequence>
<protein>
    <recommendedName>
        <fullName evidence="1">Large ribosomal subunit protein bL9</fullName>
    </recommendedName>
    <alternativeName>
        <fullName evidence="2">50S ribosomal protein L9</fullName>
    </alternativeName>
</protein>
<reference key="1">
    <citation type="journal article" date="2007" name="Proc. Natl. Acad. Sci. U.S.A.">
        <title>Genome sequencing reveals complex secondary metabolome in the marine actinomycete Salinispora tropica.</title>
        <authorList>
            <person name="Udwary D.W."/>
            <person name="Zeigler L."/>
            <person name="Asolkar R.N."/>
            <person name="Singan V."/>
            <person name="Lapidus A."/>
            <person name="Fenical W."/>
            <person name="Jensen P.R."/>
            <person name="Moore B.S."/>
        </authorList>
    </citation>
    <scope>NUCLEOTIDE SEQUENCE [LARGE SCALE GENOMIC DNA]</scope>
    <source>
        <strain>ATCC BAA-916 / DSM 44818 / JCM 13857 / NBRC 105044 / CNB-440</strain>
    </source>
</reference>
<dbReference type="EMBL" id="CP000667">
    <property type="protein sequence ID" value="ABP56981.1"/>
    <property type="molecule type" value="Genomic_DNA"/>
</dbReference>
<dbReference type="RefSeq" id="WP_012015745.1">
    <property type="nucleotide sequence ID" value="NC_009380.1"/>
</dbReference>
<dbReference type="SMR" id="A4XDG5"/>
<dbReference type="STRING" id="369723.Strop_4553"/>
<dbReference type="KEGG" id="stp:Strop_4553"/>
<dbReference type="PATRIC" id="fig|369723.5.peg.4709"/>
<dbReference type="eggNOG" id="COG0359">
    <property type="taxonomic scope" value="Bacteria"/>
</dbReference>
<dbReference type="HOGENOM" id="CLU_078938_5_1_11"/>
<dbReference type="Proteomes" id="UP000000235">
    <property type="component" value="Chromosome"/>
</dbReference>
<dbReference type="GO" id="GO:1990904">
    <property type="term" value="C:ribonucleoprotein complex"/>
    <property type="evidence" value="ECO:0007669"/>
    <property type="project" value="UniProtKB-KW"/>
</dbReference>
<dbReference type="GO" id="GO:0005840">
    <property type="term" value="C:ribosome"/>
    <property type="evidence" value="ECO:0007669"/>
    <property type="project" value="UniProtKB-KW"/>
</dbReference>
<dbReference type="GO" id="GO:0019843">
    <property type="term" value="F:rRNA binding"/>
    <property type="evidence" value="ECO:0007669"/>
    <property type="project" value="UniProtKB-UniRule"/>
</dbReference>
<dbReference type="GO" id="GO:0003735">
    <property type="term" value="F:structural constituent of ribosome"/>
    <property type="evidence" value="ECO:0007669"/>
    <property type="project" value="InterPro"/>
</dbReference>
<dbReference type="GO" id="GO:0006412">
    <property type="term" value="P:translation"/>
    <property type="evidence" value="ECO:0007669"/>
    <property type="project" value="UniProtKB-UniRule"/>
</dbReference>
<dbReference type="FunFam" id="3.40.5.10:FF:000003">
    <property type="entry name" value="50S ribosomal protein L9"/>
    <property type="match status" value="1"/>
</dbReference>
<dbReference type="Gene3D" id="3.10.430.100">
    <property type="entry name" value="Ribosomal protein L9, C-terminal domain"/>
    <property type="match status" value="1"/>
</dbReference>
<dbReference type="Gene3D" id="3.40.5.10">
    <property type="entry name" value="Ribosomal protein L9, N-terminal domain"/>
    <property type="match status" value="1"/>
</dbReference>
<dbReference type="HAMAP" id="MF_00503">
    <property type="entry name" value="Ribosomal_bL9"/>
    <property type="match status" value="1"/>
</dbReference>
<dbReference type="InterPro" id="IPR000244">
    <property type="entry name" value="Ribosomal_bL9"/>
</dbReference>
<dbReference type="InterPro" id="IPR009027">
    <property type="entry name" value="Ribosomal_bL9/RNase_H1_N"/>
</dbReference>
<dbReference type="InterPro" id="IPR020594">
    <property type="entry name" value="Ribosomal_bL9_bac/chp"/>
</dbReference>
<dbReference type="InterPro" id="IPR020069">
    <property type="entry name" value="Ribosomal_bL9_C"/>
</dbReference>
<dbReference type="InterPro" id="IPR036791">
    <property type="entry name" value="Ribosomal_bL9_C_sf"/>
</dbReference>
<dbReference type="InterPro" id="IPR020070">
    <property type="entry name" value="Ribosomal_bL9_N"/>
</dbReference>
<dbReference type="InterPro" id="IPR036935">
    <property type="entry name" value="Ribosomal_bL9_N_sf"/>
</dbReference>
<dbReference type="NCBIfam" id="TIGR00158">
    <property type="entry name" value="L9"/>
    <property type="match status" value="1"/>
</dbReference>
<dbReference type="PANTHER" id="PTHR21368">
    <property type="entry name" value="50S RIBOSOMAL PROTEIN L9"/>
    <property type="match status" value="1"/>
</dbReference>
<dbReference type="Pfam" id="PF03948">
    <property type="entry name" value="Ribosomal_L9_C"/>
    <property type="match status" value="1"/>
</dbReference>
<dbReference type="Pfam" id="PF01281">
    <property type="entry name" value="Ribosomal_L9_N"/>
    <property type="match status" value="1"/>
</dbReference>
<dbReference type="SUPFAM" id="SSF55658">
    <property type="entry name" value="L9 N-domain-like"/>
    <property type="match status" value="1"/>
</dbReference>
<dbReference type="SUPFAM" id="SSF55653">
    <property type="entry name" value="Ribosomal protein L9 C-domain"/>
    <property type="match status" value="1"/>
</dbReference>
<dbReference type="PROSITE" id="PS00651">
    <property type="entry name" value="RIBOSOMAL_L9"/>
    <property type="match status" value="1"/>
</dbReference>